<protein>
    <recommendedName>
        <fullName evidence="1">4-hydroxy-tetrahydrodipicolinate synthase</fullName>
        <shortName evidence="1">HTPA synthase</shortName>
        <ecNumber evidence="1">4.3.3.7</ecNumber>
    </recommendedName>
</protein>
<evidence type="ECO:0000255" key="1">
    <source>
        <dbReference type="HAMAP-Rule" id="MF_00418"/>
    </source>
</evidence>
<evidence type="ECO:0000305" key="2"/>
<organism>
    <name type="scientific">Methanoculleus marisnigri (strain ATCC 35101 / DSM 1498 / JR1)</name>
    <dbReference type="NCBI Taxonomy" id="368407"/>
    <lineage>
        <taxon>Archaea</taxon>
        <taxon>Methanobacteriati</taxon>
        <taxon>Methanobacteriota</taxon>
        <taxon>Stenosarchaea group</taxon>
        <taxon>Methanomicrobia</taxon>
        <taxon>Methanomicrobiales</taxon>
        <taxon>Methanomicrobiaceae</taxon>
        <taxon>Methanoculleus</taxon>
    </lineage>
</organism>
<accession>A3CVI7</accession>
<proteinExistence type="inferred from homology"/>
<dbReference type="EC" id="4.3.3.7" evidence="1"/>
<dbReference type="EMBL" id="CP000562">
    <property type="protein sequence ID" value="ABN57387.1"/>
    <property type="molecule type" value="Genomic_DNA"/>
</dbReference>
<dbReference type="RefSeq" id="WP_011844298.1">
    <property type="nucleotide sequence ID" value="NC_009051.1"/>
</dbReference>
<dbReference type="SMR" id="A3CVI7"/>
<dbReference type="STRING" id="368407.Memar_1458"/>
<dbReference type="GeneID" id="4846546"/>
<dbReference type="GeneID" id="76729527"/>
<dbReference type="KEGG" id="mem:Memar_1458"/>
<dbReference type="eggNOG" id="arCOG04172">
    <property type="taxonomic scope" value="Archaea"/>
</dbReference>
<dbReference type="HOGENOM" id="CLU_049343_7_0_2"/>
<dbReference type="OrthoDB" id="33636at2157"/>
<dbReference type="UniPathway" id="UPA00034">
    <property type="reaction ID" value="UER00017"/>
</dbReference>
<dbReference type="Proteomes" id="UP000002146">
    <property type="component" value="Chromosome"/>
</dbReference>
<dbReference type="GO" id="GO:0005737">
    <property type="term" value="C:cytoplasm"/>
    <property type="evidence" value="ECO:0007669"/>
    <property type="project" value="UniProtKB-SubCell"/>
</dbReference>
<dbReference type="GO" id="GO:0008675">
    <property type="term" value="F:2-dehydro-3-deoxy-phosphogluconate aldolase activity"/>
    <property type="evidence" value="ECO:0007669"/>
    <property type="project" value="UniProtKB-ARBA"/>
</dbReference>
<dbReference type="GO" id="GO:0008840">
    <property type="term" value="F:4-hydroxy-tetrahydrodipicolinate synthase activity"/>
    <property type="evidence" value="ECO:0007669"/>
    <property type="project" value="UniProtKB-UniRule"/>
</dbReference>
<dbReference type="GO" id="GO:0019877">
    <property type="term" value="P:diaminopimelate biosynthetic process"/>
    <property type="evidence" value="ECO:0007669"/>
    <property type="project" value="UniProtKB-UniRule"/>
</dbReference>
<dbReference type="GO" id="GO:0009089">
    <property type="term" value="P:lysine biosynthetic process via diaminopimelate"/>
    <property type="evidence" value="ECO:0007669"/>
    <property type="project" value="UniProtKB-UniRule"/>
</dbReference>
<dbReference type="CDD" id="cd00950">
    <property type="entry name" value="DHDPS"/>
    <property type="match status" value="1"/>
</dbReference>
<dbReference type="Gene3D" id="3.20.20.70">
    <property type="entry name" value="Aldolase class I"/>
    <property type="match status" value="1"/>
</dbReference>
<dbReference type="HAMAP" id="MF_00418">
    <property type="entry name" value="DapA"/>
    <property type="match status" value="1"/>
</dbReference>
<dbReference type="InterPro" id="IPR013785">
    <property type="entry name" value="Aldolase_TIM"/>
</dbReference>
<dbReference type="InterPro" id="IPR005263">
    <property type="entry name" value="DapA"/>
</dbReference>
<dbReference type="InterPro" id="IPR002220">
    <property type="entry name" value="DapA-like"/>
</dbReference>
<dbReference type="InterPro" id="IPR020625">
    <property type="entry name" value="Schiff_base-form_aldolases_AS"/>
</dbReference>
<dbReference type="InterPro" id="IPR020624">
    <property type="entry name" value="Schiff_base-form_aldolases_CS"/>
</dbReference>
<dbReference type="NCBIfam" id="TIGR00674">
    <property type="entry name" value="dapA"/>
    <property type="match status" value="1"/>
</dbReference>
<dbReference type="PANTHER" id="PTHR12128:SF66">
    <property type="entry name" value="4-HYDROXY-2-OXOGLUTARATE ALDOLASE, MITOCHONDRIAL"/>
    <property type="match status" value="1"/>
</dbReference>
<dbReference type="PANTHER" id="PTHR12128">
    <property type="entry name" value="DIHYDRODIPICOLINATE SYNTHASE"/>
    <property type="match status" value="1"/>
</dbReference>
<dbReference type="Pfam" id="PF00701">
    <property type="entry name" value="DHDPS"/>
    <property type="match status" value="1"/>
</dbReference>
<dbReference type="PIRSF" id="PIRSF001365">
    <property type="entry name" value="DHDPS"/>
    <property type="match status" value="1"/>
</dbReference>
<dbReference type="PRINTS" id="PR00146">
    <property type="entry name" value="DHPICSNTHASE"/>
</dbReference>
<dbReference type="SMART" id="SM01130">
    <property type="entry name" value="DHDPS"/>
    <property type="match status" value="1"/>
</dbReference>
<dbReference type="SUPFAM" id="SSF51569">
    <property type="entry name" value="Aldolase"/>
    <property type="match status" value="1"/>
</dbReference>
<dbReference type="PROSITE" id="PS00665">
    <property type="entry name" value="DHDPS_1"/>
    <property type="match status" value="1"/>
</dbReference>
<dbReference type="PROSITE" id="PS00666">
    <property type="entry name" value="DHDPS_2"/>
    <property type="match status" value="1"/>
</dbReference>
<name>DAPA_METMJ</name>
<feature type="chain" id="PRO_1000050220" description="4-hydroxy-tetrahydrodipicolinate synthase">
    <location>
        <begin position="1"/>
        <end position="291"/>
    </location>
</feature>
<feature type="active site" description="Proton donor/acceptor" evidence="1">
    <location>
        <position position="134"/>
    </location>
</feature>
<feature type="active site" description="Schiff-base intermediate with substrate" evidence="1">
    <location>
        <position position="162"/>
    </location>
</feature>
<feature type="binding site" evidence="1">
    <location>
        <position position="47"/>
    </location>
    <ligand>
        <name>pyruvate</name>
        <dbReference type="ChEBI" id="CHEBI:15361"/>
    </ligand>
</feature>
<feature type="binding site" evidence="1">
    <location>
        <position position="205"/>
    </location>
    <ligand>
        <name>pyruvate</name>
        <dbReference type="ChEBI" id="CHEBI:15361"/>
    </ligand>
</feature>
<feature type="site" description="Part of a proton relay during catalysis" evidence="1">
    <location>
        <position position="46"/>
    </location>
</feature>
<feature type="site" description="Part of a proton relay during catalysis" evidence="1">
    <location>
        <position position="109"/>
    </location>
</feature>
<sequence length="291" mass="31209">MFEGILPAIITPFYRDSRASLDIEGLQSNIESLLQRGVHGIVPCGSTGESATLTFEEHEQVIGKAVEVVDGRVPVLAGTGSNNTEEAVRLTRSAKDAGADGALIISPYYNKPNRSGLIKHFTKLADLDIPIVLYNVPGRTGQNLQPDLVAELARHPNIVGIKEASGDITQISRIIEETRDEEFSVISGDDAMTLPVLAVGGAGVISVAANVDPGRMVGMYEAFRAGDLARAQVLHYELAPLMRAMFIDTNPIPVKKAVELLGMAAGPVRLPLDELDEAKTEQLRKVLVNHG</sequence>
<gene>
    <name evidence="1" type="primary">dapA</name>
    <name type="ordered locus">Memar_1458</name>
</gene>
<reference key="1">
    <citation type="journal article" date="2009" name="Stand. Genomic Sci.">
        <title>Complete genome sequence of Methanoculleus marisnigri Romesser et al. 1981 type strain JR1.</title>
        <authorList>
            <person name="Anderson I.J."/>
            <person name="Sieprawska-Lupa M."/>
            <person name="Lapidus A."/>
            <person name="Nolan M."/>
            <person name="Copeland A."/>
            <person name="Glavina Del Rio T."/>
            <person name="Tice H."/>
            <person name="Dalin E."/>
            <person name="Barry K."/>
            <person name="Saunders E."/>
            <person name="Han C."/>
            <person name="Brettin T."/>
            <person name="Detter J.C."/>
            <person name="Bruce D."/>
            <person name="Mikhailova N."/>
            <person name="Pitluck S."/>
            <person name="Hauser L."/>
            <person name="Land M."/>
            <person name="Lucas S."/>
            <person name="Richardson P."/>
            <person name="Whitman W.B."/>
            <person name="Kyrpides N.C."/>
        </authorList>
    </citation>
    <scope>NUCLEOTIDE SEQUENCE [LARGE SCALE GENOMIC DNA]</scope>
    <source>
        <strain>ATCC 35101 / DSM 1498 / JR1</strain>
    </source>
</reference>
<keyword id="KW-0028">Amino-acid biosynthesis</keyword>
<keyword id="KW-0963">Cytoplasm</keyword>
<keyword id="KW-0220">Diaminopimelate biosynthesis</keyword>
<keyword id="KW-0456">Lyase</keyword>
<keyword id="KW-0457">Lysine biosynthesis</keyword>
<keyword id="KW-0704">Schiff base</keyword>
<comment type="function">
    <text evidence="1">Catalyzes the condensation of (S)-aspartate-beta-semialdehyde [(S)-ASA] and pyruvate to 4-hydroxy-tetrahydrodipicolinate (HTPA).</text>
</comment>
<comment type="catalytic activity">
    <reaction evidence="1">
        <text>L-aspartate 4-semialdehyde + pyruvate = (2S,4S)-4-hydroxy-2,3,4,5-tetrahydrodipicolinate + H2O + H(+)</text>
        <dbReference type="Rhea" id="RHEA:34171"/>
        <dbReference type="ChEBI" id="CHEBI:15361"/>
        <dbReference type="ChEBI" id="CHEBI:15377"/>
        <dbReference type="ChEBI" id="CHEBI:15378"/>
        <dbReference type="ChEBI" id="CHEBI:67139"/>
        <dbReference type="ChEBI" id="CHEBI:537519"/>
        <dbReference type="EC" id="4.3.3.7"/>
    </reaction>
</comment>
<comment type="pathway">
    <text evidence="1">Amino-acid biosynthesis; L-lysine biosynthesis via DAP pathway; (S)-tetrahydrodipicolinate from L-aspartate: step 3/4.</text>
</comment>
<comment type="subunit">
    <text evidence="1">Homotetramer; dimer of dimers.</text>
</comment>
<comment type="subcellular location">
    <subcellularLocation>
        <location evidence="1">Cytoplasm</location>
    </subcellularLocation>
</comment>
<comment type="similarity">
    <text evidence="1">Belongs to the DapA family.</text>
</comment>
<comment type="caution">
    <text evidence="2">Was originally thought to be a dihydrodipicolinate synthase (DHDPS), catalyzing the condensation of (S)-aspartate-beta-semialdehyde [(S)-ASA] and pyruvate to dihydrodipicolinate (DHDP). However, it was shown in E.coli that the product of the enzymatic reaction is not dihydrodipicolinate but in fact (4S)-4-hydroxy-2,3,4,5-tetrahydro-(2S)-dipicolinic acid (HTPA), and that the consecutive dehydration reaction leading to DHDP is not spontaneous but catalyzed by DapB.</text>
</comment>